<accession>A7Z3X4</accession>
<dbReference type="EC" id="5.3.2.5" evidence="1"/>
<dbReference type="EMBL" id="CP000560">
    <property type="protein sequence ID" value="ABS73700.1"/>
    <property type="status" value="ALT_INIT"/>
    <property type="molecule type" value="Genomic_DNA"/>
</dbReference>
<dbReference type="RefSeq" id="WP_023356860.1">
    <property type="nucleotide sequence ID" value="NC_009725.2"/>
</dbReference>
<dbReference type="SMR" id="A7Z3X4"/>
<dbReference type="GeneID" id="93080472"/>
<dbReference type="KEGG" id="bay:RBAM_013370"/>
<dbReference type="HOGENOM" id="CLU_031450_3_1_9"/>
<dbReference type="UniPathway" id="UPA00904">
    <property type="reaction ID" value="UER00876"/>
</dbReference>
<dbReference type="Proteomes" id="UP000001120">
    <property type="component" value="Chromosome"/>
</dbReference>
<dbReference type="GO" id="GO:0043715">
    <property type="term" value="F:2,3-diketo-5-methylthiopentyl-1-phosphate enolase activity"/>
    <property type="evidence" value="ECO:0007669"/>
    <property type="project" value="UniProtKB-UniRule"/>
</dbReference>
<dbReference type="GO" id="GO:0000287">
    <property type="term" value="F:magnesium ion binding"/>
    <property type="evidence" value="ECO:0007669"/>
    <property type="project" value="UniProtKB-UniRule"/>
</dbReference>
<dbReference type="GO" id="GO:0016984">
    <property type="term" value="F:ribulose-bisphosphate carboxylase activity"/>
    <property type="evidence" value="ECO:0007669"/>
    <property type="project" value="InterPro"/>
</dbReference>
<dbReference type="GO" id="GO:0015977">
    <property type="term" value="P:carbon fixation"/>
    <property type="evidence" value="ECO:0007669"/>
    <property type="project" value="InterPro"/>
</dbReference>
<dbReference type="GO" id="GO:0019509">
    <property type="term" value="P:L-methionine salvage from methylthioadenosine"/>
    <property type="evidence" value="ECO:0007669"/>
    <property type="project" value="UniProtKB-UniRule"/>
</dbReference>
<dbReference type="CDD" id="cd08209">
    <property type="entry name" value="RLP_DK-MTP-1-P-enolase"/>
    <property type="match status" value="1"/>
</dbReference>
<dbReference type="Gene3D" id="3.20.20.110">
    <property type="entry name" value="Ribulose bisphosphate carboxylase, large subunit, C-terminal domain"/>
    <property type="match status" value="1"/>
</dbReference>
<dbReference type="Gene3D" id="3.30.70.150">
    <property type="entry name" value="RuBisCO large subunit, N-terminal domain"/>
    <property type="match status" value="1"/>
</dbReference>
<dbReference type="HAMAP" id="MF_01679">
    <property type="entry name" value="Salvage_MtnW"/>
    <property type="match status" value="1"/>
</dbReference>
<dbReference type="InterPro" id="IPR017717">
    <property type="entry name" value="Diketo-Methiopentyl-P_enolase"/>
</dbReference>
<dbReference type="InterPro" id="IPR033966">
    <property type="entry name" value="RuBisCO"/>
</dbReference>
<dbReference type="InterPro" id="IPR000685">
    <property type="entry name" value="RuBisCO_lsu_C"/>
</dbReference>
<dbReference type="InterPro" id="IPR036376">
    <property type="entry name" value="RuBisCO_lsu_C_sf"/>
</dbReference>
<dbReference type="InterPro" id="IPR017443">
    <property type="entry name" value="RuBisCO_lsu_fd_N"/>
</dbReference>
<dbReference type="InterPro" id="IPR036422">
    <property type="entry name" value="RuBisCO_lsu_N_sf"/>
</dbReference>
<dbReference type="NCBIfam" id="NF007095">
    <property type="entry name" value="PRK09549.1"/>
    <property type="match status" value="1"/>
</dbReference>
<dbReference type="NCBIfam" id="TIGR03332">
    <property type="entry name" value="salvage_mtnW"/>
    <property type="match status" value="1"/>
</dbReference>
<dbReference type="PANTHER" id="PTHR42704">
    <property type="entry name" value="RIBULOSE BISPHOSPHATE CARBOXYLASE"/>
    <property type="match status" value="1"/>
</dbReference>
<dbReference type="PANTHER" id="PTHR42704:SF17">
    <property type="entry name" value="RIBULOSE BISPHOSPHATE CARBOXYLASE LARGE CHAIN"/>
    <property type="match status" value="1"/>
</dbReference>
<dbReference type="Pfam" id="PF00016">
    <property type="entry name" value="RuBisCO_large"/>
    <property type="match status" value="2"/>
</dbReference>
<dbReference type="Pfam" id="PF02788">
    <property type="entry name" value="RuBisCO_large_N"/>
    <property type="match status" value="1"/>
</dbReference>
<dbReference type="SFLD" id="SFLDF00157">
    <property type="entry name" value="2_3-diketo-5-methylthiopentyl"/>
    <property type="match status" value="1"/>
</dbReference>
<dbReference type="SFLD" id="SFLDS00014">
    <property type="entry name" value="RuBisCO"/>
    <property type="match status" value="1"/>
</dbReference>
<dbReference type="SUPFAM" id="SSF51649">
    <property type="entry name" value="RuBisCo, C-terminal domain"/>
    <property type="match status" value="1"/>
</dbReference>
<dbReference type="SUPFAM" id="SSF54966">
    <property type="entry name" value="RuBisCO, large subunit, small (N-terminal) domain"/>
    <property type="match status" value="1"/>
</dbReference>
<gene>
    <name evidence="1" type="primary">mtnW</name>
    <name type="ordered locus">RBAM_013370</name>
</gene>
<organism>
    <name type="scientific">Bacillus velezensis (strain DSM 23117 / BGSC 10A6 / LMG 26770 / FZB42)</name>
    <name type="common">Bacillus amyloliquefaciens subsp. plantarum</name>
    <dbReference type="NCBI Taxonomy" id="326423"/>
    <lineage>
        <taxon>Bacteria</taxon>
        <taxon>Bacillati</taxon>
        <taxon>Bacillota</taxon>
        <taxon>Bacilli</taxon>
        <taxon>Bacillales</taxon>
        <taxon>Bacillaceae</taxon>
        <taxon>Bacillus</taxon>
        <taxon>Bacillus amyloliquefaciens group</taxon>
    </lineage>
</organism>
<reference key="1">
    <citation type="journal article" date="2007" name="Nat. Biotechnol.">
        <title>Comparative analysis of the complete genome sequence of the plant growth-promoting bacterium Bacillus amyloliquefaciens FZB42.</title>
        <authorList>
            <person name="Chen X.H."/>
            <person name="Koumoutsi A."/>
            <person name="Scholz R."/>
            <person name="Eisenreich A."/>
            <person name="Schneider K."/>
            <person name="Heinemeyer I."/>
            <person name="Morgenstern B."/>
            <person name="Voss B."/>
            <person name="Hess W.R."/>
            <person name="Reva O."/>
            <person name="Junge H."/>
            <person name="Voigt B."/>
            <person name="Jungblut P.R."/>
            <person name="Vater J."/>
            <person name="Suessmuth R."/>
            <person name="Liesegang H."/>
            <person name="Strittmatter A."/>
            <person name="Gottschalk G."/>
            <person name="Borriss R."/>
        </authorList>
    </citation>
    <scope>NUCLEOTIDE SEQUENCE [LARGE SCALE GENOMIC DNA]</scope>
    <source>
        <strain>DSM 23117 / BGSC 10A6 / LMG 26770 / FZB42</strain>
    </source>
</reference>
<comment type="function">
    <text evidence="1">Catalyzes the enolization of 2,3-diketo-5-methylthiopentyl-1-phosphate (DK-MTP-1-P) into 2-hydroxy-3-keto-5-methylthiopentenyl-1-phosphate (HK-MTPenyl-1-P).</text>
</comment>
<comment type="catalytic activity">
    <reaction evidence="1">
        <text>5-methylsulfanyl-2,3-dioxopentyl phosphate = 2-hydroxy-5-methylsulfanyl-3-oxopent-1-enyl phosphate</text>
        <dbReference type="Rhea" id="RHEA:18769"/>
        <dbReference type="ChEBI" id="CHEBI:58828"/>
        <dbReference type="ChEBI" id="CHEBI:59505"/>
        <dbReference type="EC" id="5.3.2.5"/>
    </reaction>
</comment>
<comment type="cofactor">
    <cofactor evidence="1">
        <name>Mg(2+)</name>
        <dbReference type="ChEBI" id="CHEBI:18420"/>
    </cofactor>
    <text evidence="1">Binds 1 Mg(2+) ion per subunit.</text>
</comment>
<comment type="pathway">
    <text evidence="1">Amino-acid biosynthesis; L-methionine biosynthesis via salvage pathway; L-methionine from S-methyl-5-thio-alpha-D-ribose 1-phosphate: step 3/6.</text>
</comment>
<comment type="subunit">
    <text evidence="1">Homodimer.</text>
</comment>
<comment type="miscellaneous">
    <text evidence="1">Has no RuBP-carboxylation activity.</text>
</comment>
<comment type="similarity">
    <text evidence="1">Belongs to the RuBisCO large chain family. Type IV subfamily.</text>
</comment>
<comment type="sequence caution" evidence="2">
    <conflict type="erroneous initiation">
        <sequence resource="EMBL-CDS" id="ABS73700"/>
    </conflict>
</comment>
<evidence type="ECO:0000255" key="1">
    <source>
        <dbReference type="HAMAP-Rule" id="MF_01679"/>
    </source>
</evidence>
<evidence type="ECO:0000305" key="2"/>
<name>MTNW_BACVZ</name>
<protein>
    <recommendedName>
        <fullName evidence="1">2,3-diketo-5-methylthiopentyl-1-phosphate enolase</fullName>
        <shortName evidence="1">DK-MTP-1-P enolase</shortName>
        <ecNumber evidence="1">5.3.2.5</ecNumber>
    </recommendedName>
    <alternativeName>
        <fullName evidence="1">RuBisCO-like protein</fullName>
        <shortName evidence="1">RLP</shortName>
    </alternativeName>
</protein>
<feature type="chain" id="PRO_0000357284" description="2,3-diketo-5-methylthiopentyl-1-phosphate enolase">
    <location>
        <begin position="1"/>
        <end position="404"/>
    </location>
</feature>
<feature type="active site" description="Proton acceptor" evidence="1">
    <location>
        <position position="91"/>
    </location>
</feature>
<feature type="binding site" evidence="1">
    <location>
        <position position="140"/>
    </location>
    <ligand>
        <name>substrate</name>
    </ligand>
</feature>
<feature type="binding site" evidence="1">
    <location>
        <begin position="166"/>
        <end position="169"/>
    </location>
    <ligand>
        <name>substrate</name>
    </ligand>
</feature>
<feature type="binding site" description="via carbamate group" evidence="1">
    <location>
        <position position="166"/>
    </location>
    <ligand>
        <name>Mg(2+)</name>
        <dbReference type="ChEBI" id="CHEBI:18420"/>
    </ligand>
</feature>
<feature type="binding site" evidence="1">
    <location>
        <position position="168"/>
    </location>
    <ligand>
        <name>Mg(2+)</name>
        <dbReference type="ChEBI" id="CHEBI:18420"/>
    </ligand>
</feature>
<feature type="binding site" evidence="1">
    <location>
        <position position="169"/>
    </location>
    <ligand>
        <name>Mg(2+)</name>
        <dbReference type="ChEBI" id="CHEBI:18420"/>
    </ligand>
</feature>
<feature type="binding site" evidence="1">
    <location>
        <position position="257"/>
    </location>
    <ligand>
        <name>substrate</name>
    </ligand>
</feature>
<feature type="binding site" evidence="1">
    <location>
        <position position="329"/>
    </location>
    <ligand>
        <name>substrate</name>
    </ligand>
</feature>
<feature type="binding site" evidence="1">
    <location>
        <begin position="351"/>
        <end position="352"/>
    </location>
    <ligand>
        <name>substrate</name>
    </ligand>
</feature>
<feature type="modified residue" description="N6-carboxylysine" evidence="1">
    <location>
        <position position="166"/>
    </location>
</feature>
<keyword id="KW-0028">Amino-acid biosynthesis</keyword>
<keyword id="KW-0413">Isomerase</keyword>
<keyword id="KW-0460">Magnesium</keyword>
<keyword id="KW-0479">Metal-binding</keyword>
<keyword id="KW-0486">Methionine biosynthesis</keyword>
<sequence>MSEVLATYLLTDTTDSEKRAEQIAAGLTVGSWTDLPLVKQEQLRKHKGRVVKVEEKEGTSENETQSVITIAYPEVNFSRDIPAVLTTVFGKLSLDGKIKLTDLEFSEGFKRSLPGPKFGIYGIRKLLGEFERPLLMSIFKGVIGRDLADIKEQLRQQALGGVDLIKDDEIFFENELAPFETRIIEGKQVLKETREETGHKTLYAVNLTGRTAELRDKARRAAELGADALLLNVFAYGLDVMQSLAEDKEIPLPIMAHPAVSGAFTSSPVYGLSHALLLGKLNRYCGADFSLFPSPYGSVALPKESALAIHDECVKDDVFHPSFAVPSAGIHPGMVPLLMRDFGIDHIINAGGGIHGHPKGGEGGGKAFRAIIDAVLEAQPIEEKAASCKDLQLALDKWGRVEAV</sequence>
<proteinExistence type="inferred from homology"/>